<sequence length="261" mass="29165">MSDSISVIKEKLSEVTSENDPFFQKCIQDERKGVEKLVQSVRRKWEKEAKLLVKLKEMTQYETDLFQQGYKYIAGVDEVGRGPLAGPVVAAAVILPADFSVVGINDSKQLSEAKRDALFEKIKKEAIAIGVGIIEHDVIDQVNIYEATKLAMCEALNQLTPEPDFVLIDAMPLRYTEAELSLIKGDTKSISIAAASIIAKVTRDRLMQMYDEKYPGYDFANNMGYGTKKHLLGLDTIGICPIHRMSFSPVKESKLHFDSLN</sequence>
<proteinExistence type="inferred from homology"/>
<feature type="chain" id="PRO_0000111588" description="Ribonuclease HII">
    <location>
        <begin position="1"/>
        <end position="261"/>
    </location>
</feature>
<feature type="domain" description="RNase H type-2" evidence="2">
    <location>
        <begin position="71"/>
        <end position="259"/>
    </location>
</feature>
<feature type="binding site" evidence="1">
    <location>
        <position position="77"/>
    </location>
    <ligand>
        <name>a divalent metal cation</name>
        <dbReference type="ChEBI" id="CHEBI:60240"/>
    </ligand>
</feature>
<feature type="binding site" evidence="1">
    <location>
        <position position="78"/>
    </location>
    <ligand>
        <name>a divalent metal cation</name>
        <dbReference type="ChEBI" id="CHEBI:60240"/>
    </ligand>
</feature>
<feature type="binding site" evidence="1">
    <location>
        <position position="169"/>
    </location>
    <ligand>
        <name>a divalent metal cation</name>
        <dbReference type="ChEBI" id="CHEBI:60240"/>
    </ligand>
</feature>
<organism>
    <name type="scientific">Listeria monocytogenes serovar 1/2a (strain ATCC BAA-679 / EGD-e)</name>
    <dbReference type="NCBI Taxonomy" id="169963"/>
    <lineage>
        <taxon>Bacteria</taxon>
        <taxon>Bacillati</taxon>
        <taxon>Bacillota</taxon>
        <taxon>Bacilli</taxon>
        <taxon>Bacillales</taxon>
        <taxon>Listeriaceae</taxon>
        <taxon>Listeria</taxon>
    </lineage>
</organism>
<comment type="function">
    <text evidence="1">Endonuclease that specifically degrades the RNA of RNA-DNA hybrids.</text>
</comment>
<comment type="catalytic activity">
    <reaction evidence="1">
        <text>Endonucleolytic cleavage to 5'-phosphomonoester.</text>
        <dbReference type="EC" id="3.1.26.4"/>
    </reaction>
</comment>
<comment type="cofactor">
    <cofactor evidence="1">
        <name>Mn(2+)</name>
        <dbReference type="ChEBI" id="CHEBI:29035"/>
    </cofactor>
    <cofactor evidence="1">
        <name>Mg(2+)</name>
        <dbReference type="ChEBI" id="CHEBI:18420"/>
    </cofactor>
    <text evidence="1">Manganese or magnesium. Binds 1 divalent metal ion per monomer in the absence of substrate. May bind a second metal ion after substrate binding.</text>
</comment>
<comment type="subcellular location">
    <subcellularLocation>
        <location evidence="1">Cytoplasm</location>
    </subcellularLocation>
</comment>
<comment type="similarity">
    <text evidence="1">Belongs to the RNase HII family.</text>
</comment>
<name>RNH2_LISMO</name>
<reference key="1">
    <citation type="journal article" date="2001" name="Science">
        <title>Comparative genomics of Listeria species.</title>
        <authorList>
            <person name="Glaser P."/>
            <person name="Frangeul L."/>
            <person name="Buchrieser C."/>
            <person name="Rusniok C."/>
            <person name="Amend A."/>
            <person name="Baquero F."/>
            <person name="Berche P."/>
            <person name="Bloecker H."/>
            <person name="Brandt P."/>
            <person name="Chakraborty T."/>
            <person name="Charbit A."/>
            <person name="Chetouani F."/>
            <person name="Couve E."/>
            <person name="de Daruvar A."/>
            <person name="Dehoux P."/>
            <person name="Domann E."/>
            <person name="Dominguez-Bernal G."/>
            <person name="Duchaud E."/>
            <person name="Durant L."/>
            <person name="Dussurget O."/>
            <person name="Entian K.-D."/>
            <person name="Fsihi H."/>
            <person name="Garcia-del Portillo F."/>
            <person name="Garrido P."/>
            <person name="Gautier L."/>
            <person name="Goebel W."/>
            <person name="Gomez-Lopez N."/>
            <person name="Hain T."/>
            <person name="Hauf J."/>
            <person name="Jackson D."/>
            <person name="Jones L.-M."/>
            <person name="Kaerst U."/>
            <person name="Kreft J."/>
            <person name="Kuhn M."/>
            <person name="Kunst F."/>
            <person name="Kurapkat G."/>
            <person name="Madueno E."/>
            <person name="Maitournam A."/>
            <person name="Mata Vicente J."/>
            <person name="Ng E."/>
            <person name="Nedjari H."/>
            <person name="Nordsiek G."/>
            <person name="Novella S."/>
            <person name="de Pablos B."/>
            <person name="Perez-Diaz J.-C."/>
            <person name="Purcell R."/>
            <person name="Remmel B."/>
            <person name="Rose M."/>
            <person name="Schlueter T."/>
            <person name="Simoes N."/>
            <person name="Tierrez A."/>
            <person name="Vazquez-Boland J.-A."/>
            <person name="Voss H."/>
            <person name="Wehland J."/>
            <person name="Cossart P."/>
        </authorList>
    </citation>
    <scope>NUCLEOTIDE SEQUENCE [LARGE SCALE GENOMIC DNA]</scope>
    <source>
        <strain>ATCC BAA-679 / EGD-e</strain>
    </source>
</reference>
<evidence type="ECO:0000255" key="1">
    <source>
        <dbReference type="HAMAP-Rule" id="MF_00052"/>
    </source>
</evidence>
<evidence type="ECO:0000255" key="2">
    <source>
        <dbReference type="PROSITE-ProRule" id="PRU01319"/>
    </source>
</evidence>
<protein>
    <recommendedName>
        <fullName evidence="1">Ribonuclease HII</fullName>
        <shortName evidence="1">RNase HII</shortName>
        <ecNumber evidence="1">3.1.26.4</ecNumber>
    </recommendedName>
</protein>
<gene>
    <name evidence="1" type="primary">rnhB</name>
    <name type="ordered locus">lmo1273</name>
</gene>
<dbReference type="EC" id="3.1.26.4" evidence="1"/>
<dbReference type="EMBL" id="AL591978">
    <property type="protein sequence ID" value="CAC99351.1"/>
    <property type="molecule type" value="Genomic_DNA"/>
</dbReference>
<dbReference type="PIR" id="AI1233">
    <property type="entry name" value="AI1233"/>
</dbReference>
<dbReference type="RefSeq" id="NP_464798.1">
    <property type="nucleotide sequence ID" value="NC_003210.1"/>
</dbReference>
<dbReference type="RefSeq" id="WP_003723891.1">
    <property type="nucleotide sequence ID" value="NZ_CP149495.1"/>
</dbReference>
<dbReference type="SMR" id="Q8Y7K4"/>
<dbReference type="STRING" id="169963.gene:17593930"/>
<dbReference type="PaxDb" id="169963-lmo1273"/>
<dbReference type="EnsemblBacteria" id="CAC99351">
    <property type="protein sequence ID" value="CAC99351"/>
    <property type="gene ID" value="CAC99351"/>
</dbReference>
<dbReference type="GeneID" id="985073"/>
<dbReference type="KEGG" id="lmo:lmo1273"/>
<dbReference type="PATRIC" id="fig|169963.11.peg.1308"/>
<dbReference type="eggNOG" id="COG0164">
    <property type="taxonomic scope" value="Bacteria"/>
</dbReference>
<dbReference type="HOGENOM" id="CLU_036532_2_1_9"/>
<dbReference type="OrthoDB" id="9803420at2"/>
<dbReference type="PhylomeDB" id="Q8Y7K4"/>
<dbReference type="BioCyc" id="LMON169963:LMO1273-MONOMER"/>
<dbReference type="BRENDA" id="3.1.26.4">
    <property type="organism ID" value="10536"/>
</dbReference>
<dbReference type="Proteomes" id="UP000000817">
    <property type="component" value="Chromosome"/>
</dbReference>
<dbReference type="GO" id="GO:0005737">
    <property type="term" value="C:cytoplasm"/>
    <property type="evidence" value="ECO:0007669"/>
    <property type="project" value="UniProtKB-SubCell"/>
</dbReference>
<dbReference type="GO" id="GO:0032299">
    <property type="term" value="C:ribonuclease H2 complex"/>
    <property type="evidence" value="ECO:0000318"/>
    <property type="project" value="GO_Central"/>
</dbReference>
<dbReference type="GO" id="GO:0030145">
    <property type="term" value="F:manganese ion binding"/>
    <property type="evidence" value="ECO:0007669"/>
    <property type="project" value="UniProtKB-UniRule"/>
</dbReference>
<dbReference type="GO" id="GO:0003723">
    <property type="term" value="F:RNA binding"/>
    <property type="evidence" value="ECO:0007669"/>
    <property type="project" value="InterPro"/>
</dbReference>
<dbReference type="GO" id="GO:0004523">
    <property type="term" value="F:RNA-DNA hybrid ribonuclease activity"/>
    <property type="evidence" value="ECO:0000318"/>
    <property type="project" value="GO_Central"/>
</dbReference>
<dbReference type="GO" id="GO:0043137">
    <property type="term" value="P:DNA replication, removal of RNA primer"/>
    <property type="evidence" value="ECO:0000318"/>
    <property type="project" value="GO_Central"/>
</dbReference>
<dbReference type="GO" id="GO:0006298">
    <property type="term" value="P:mismatch repair"/>
    <property type="evidence" value="ECO:0000318"/>
    <property type="project" value="GO_Central"/>
</dbReference>
<dbReference type="CDD" id="cd07182">
    <property type="entry name" value="RNase_HII_bacteria_HII_like"/>
    <property type="match status" value="1"/>
</dbReference>
<dbReference type="FunFam" id="3.30.420.10:FF:000006">
    <property type="entry name" value="Ribonuclease HII"/>
    <property type="match status" value="1"/>
</dbReference>
<dbReference type="Gene3D" id="3.30.420.10">
    <property type="entry name" value="Ribonuclease H-like superfamily/Ribonuclease H"/>
    <property type="match status" value="1"/>
</dbReference>
<dbReference type="HAMAP" id="MF_00052_B">
    <property type="entry name" value="RNase_HII_B"/>
    <property type="match status" value="1"/>
</dbReference>
<dbReference type="InterPro" id="IPR022898">
    <property type="entry name" value="RNase_HII"/>
</dbReference>
<dbReference type="InterPro" id="IPR001352">
    <property type="entry name" value="RNase_HII/HIII"/>
</dbReference>
<dbReference type="InterPro" id="IPR024567">
    <property type="entry name" value="RNase_HII/HIII_dom"/>
</dbReference>
<dbReference type="InterPro" id="IPR012337">
    <property type="entry name" value="RNaseH-like_sf"/>
</dbReference>
<dbReference type="InterPro" id="IPR036397">
    <property type="entry name" value="RNaseH_sf"/>
</dbReference>
<dbReference type="NCBIfam" id="NF000594">
    <property type="entry name" value="PRK00015.1-1"/>
    <property type="match status" value="1"/>
</dbReference>
<dbReference type="NCBIfam" id="NF000595">
    <property type="entry name" value="PRK00015.1-3"/>
    <property type="match status" value="1"/>
</dbReference>
<dbReference type="PANTHER" id="PTHR10954">
    <property type="entry name" value="RIBONUCLEASE H2 SUBUNIT A"/>
    <property type="match status" value="1"/>
</dbReference>
<dbReference type="PANTHER" id="PTHR10954:SF18">
    <property type="entry name" value="RIBONUCLEASE HII"/>
    <property type="match status" value="1"/>
</dbReference>
<dbReference type="Pfam" id="PF01351">
    <property type="entry name" value="RNase_HII"/>
    <property type="match status" value="1"/>
</dbReference>
<dbReference type="SUPFAM" id="SSF53098">
    <property type="entry name" value="Ribonuclease H-like"/>
    <property type="match status" value="1"/>
</dbReference>
<dbReference type="PROSITE" id="PS51975">
    <property type="entry name" value="RNASE_H_2"/>
    <property type="match status" value="1"/>
</dbReference>
<accession>Q8Y7K4</accession>
<keyword id="KW-0963">Cytoplasm</keyword>
<keyword id="KW-0255">Endonuclease</keyword>
<keyword id="KW-0378">Hydrolase</keyword>
<keyword id="KW-0464">Manganese</keyword>
<keyword id="KW-0479">Metal-binding</keyword>
<keyword id="KW-0540">Nuclease</keyword>
<keyword id="KW-1185">Reference proteome</keyword>